<proteinExistence type="inferred from homology"/>
<feature type="chain" id="PRO_0000300084" description="Uncharacterized protein SAV1352">
    <location>
        <begin position="1"/>
        <end position="98"/>
    </location>
</feature>
<protein>
    <recommendedName>
        <fullName>Uncharacterized protein SAV1352</fullName>
    </recommendedName>
</protein>
<accession>Q99UC6</accession>
<evidence type="ECO:0000305" key="1"/>
<name>Y1352_STAAM</name>
<comment type="similarity">
    <text evidence="1">Belongs to the HesB/IscA family.</text>
</comment>
<sequence>MQIELTDAAVTWFKNELELPENNKVLVFFVRYGGEFQLKQGFSPAFTVEPKEDVDIGYEQQYDDLNVVVAEKDLWYFEDDHIIVNVVDHEDEISYSTK</sequence>
<dbReference type="EMBL" id="BA000017">
    <property type="protein sequence ID" value="BAB57514.1"/>
    <property type="molecule type" value="Genomic_DNA"/>
</dbReference>
<dbReference type="RefSeq" id="WP_001165377.1">
    <property type="nucleotide sequence ID" value="NC_002758.2"/>
</dbReference>
<dbReference type="SMR" id="Q99UC6"/>
<dbReference type="KEGG" id="sav:SAV1352"/>
<dbReference type="HOGENOM" id="CLU_163967_0_0_9"/>
<dbReference type="PhylomeDB" id="Q99UC6"/>
<dbReference type="Proteomes" id="UP000002481">
    <property type="component" value="Chromosome"/>
</dbReference>
<dbReference type="InterPro" id="IPR035903">
    <property type="entry name" value="HesB-like_dom_sf"/>
</dbReference>
<dbReference type="InterPro" id="IPR008326">
    <property type="entry name" value="PdhI-like"/>
</dbReference>
<dbReference type="PIRSF" id="PIRSF034852">
    <property type="entry name" value="UCP034852"/>
    <property type="match status" value="1"/>
</dbReference>
<dbReference type="SUPFAM" id="SSF89360">
    <property type="entry name" value="HesB-like domain"/>
    <property type="match status" value="1"/>
</dbReference>
<reference key="1">
    <citation type="journal article" date="2001" name="Lancet">
        <title>Whole genome sequencing of meticillin-resistant Staphylococcus aureus.</title>
        <authorList>
            <person name="Kuroda M."/>
            <person name="Ohta T."/>
            <person name="Uchiyama I."/>
            <person name="Baba T."/>
            <person name="Yuzawa H."/>
            <person name="Kobayashi I."/>
            <person name="Cui L."/>
            <person name="Oguchi A."/>
            <person name="Aoki K."/>
            <person name="Nagai Y."/>
            <person name="Lian J.-Q."/>
            <person name="Ito T."/>
            <person name="Kanamori M."/>
            <person name="Matsumaru H."/>
            <person name="Maruyama A."/>
            <person name="Murakami H."/>
            <person name="Hosoyama A."/>
            <person name="Mizutani-Ui Y."/>
            <person name="Takahashi N.K."/>
            <person name="Sawano T."/>
            <person name="Inoue R."/>
            <person name="Kaito C."/>
            <person name="Sekimizu K."/>
            <person name="Hirakawa H."/>
            <person name="Kuhara S."/>
            <person name="Goto S."/>
            <person name="Yabuzaki J."/>
            <person name="Kanehisa M."/>
            <person name="Yamashita A."/>
            <person name="Oshima K."/>
            <person name="Furuya K."/>
            <person name="Yoshino C."/>
            <person name="Shiba T."/>
            <person name="Hattori M."/>
            <person name="Ogasawara N."/>
            <person name="Hayashi H."/>
            <person name="Hiramatsu K."/>
        </authorList>
    </citation>
    <scope>NUCLEOTIDE SEQUENCE [LARGE SCALE GENOMIC DNA]</scope>
    <source>
        <strain>Mu50 / ATCC 700699</strain>
    </source>
</reference>
<gene>
    <name type="ordered locus">SAV1352</name>
</gene>
<organism>
    <name type="scientific">Staphylococcus aureus (strain Mu50 / ATCC 700699)</name>
    <dbReference type="NCBI Taxonomy" id="158878"/>
    <lineage>
        <taxon>Bacteria</taxon>
        <taxon>Bacillati</taxon>
        <taxon>Bacillota</taxon>
        <taxon>Bacilli</taxon>
        <taxon>Bacillales</taxon>
        <taxon>Staphylococcaceae</taxon>
        <taxon>Staphylococcus</taxon>
    </lineage>
</organism>